<gene>
    <name type="ORF">PABG_01461</name>
</gene>
<name>P20D1_PARBP</name>
<comment type="cofactor">
    <cofactor evidence="1">
        <name>Zn(2+)</name>
        <dbReference type="ChEBI" id="CHEBI:29105"/>
    </cofactor>
    <text evidence="1">Binds 2 Zn(2+) ions per subunit.</text>
</comment>
<comment type="subcellular location">
    <subcellularLocation>
        <location evidence="3">Secreted</location>
    </subcellularLocation>
</comment>
<comment type="similarity">
    <text evidence="3">Belongs to the peptidase M20A family.</text>
</comment>
<keyword id="KW-0325">Glycoprotein</keyword>
<keyword id="KW-0378">Hydrolase</keyword>
<keyword id="KW-0479">Metal-binding</keyword>
<keyword id="KW-0645">Protease</keyword>
<keyword id="KW-0964">Secreted</keyword>
<keyword id="KW-0732">Signal</keyword>
<keyword id="KW-0862">Zinc</keyword>
<evidence type="ECO:0000250" key="1"/>
<evidence type="ECO:0000255" key="2"/>
<evidence type="ECO:0000305" key="3"/>
<reference key="1">
    <citation type="journal article" date="2011" name="PLoS Genet.">
        <title>Comparative genomic analysis of human fungal pathogens causing paracoccidioidomycosis.</title>
        <authorList>
            <person name="Desjardins C.A."/>
            <person name="Champion M.D."/>
            <person name="Holder J.W."/>
            <person name="Muszewska A."/>
            <person name="Goldberg J."/>
            <person name="Bailao A.M."/>
            <person name="Brigido M.M."/>
            <person name="Ferreira M.E."/>
            <person name="Garcia A.M."/>
            <person name="Grynberg M."/>
            <person name="Gujja S."/>
            <person name="Heiman D.I."/>
            <person name="Henn M.R."/>
            <person name="Kodira C.D."/>
            <person name="Leon-Narvaez H."/>
            <person name="Longo L.V.G."/>
            <person name="Ma L.-J."/>
            <person name="Malavazi I."/>
            <person name="Matsuo A.L."/>
            <person name="Morais F.V."/>
            <person name="Pereira M."/>
            <person name="Rodriguez-Brito S."/>
            <person name="Sakthikumar S."/>
            <person name="Salem-Izacc S.M."/>
            <person name="Sykes S.M."/>
            <person name="Teixeira M.M."/>
            <person name="Vallejo M.C."/>
            <person name="Walter M.E."/>
            <person name="Yandava C."/>
            <person name="Young S."/>
            <person name="Zeng Q."/>
            <person name="Zucker J."/>
            <person name="Felipe M.S."/>
            <person name="Goldman G.H."/>
            <person name="Haas B.J."/>
            <person name="McEwen J.G."/>
            <person name="Nino-Vega G."/>
            <person name="Puccia R."/>
            <person name="San-Blas G."/>
            <person name="Soares C.M."/>
            <person name="Birren B.W."/>
            <person name="Cuomo C.A."/>
        </authorList>
    </citation>
    <scope>NUCLEOTIDE SEQUENCE [LARGE SCALE GENOMIC DNA]</scope>
    <source>
        <strain>Pb03</strain>
    </source>
</reference>
<dbReference type="EC" id="3.4.17.-"/>
<dbReference type="EMBL" id="KN305532">
    <property type="protein sequence ID" value="EEH19142.1"/>
    <property type="molecule type" value="Genomic_DNA"/>
</dbReference>
<dbReference type="SMR" id="C0S1J6"/>
<dbReference type="VEuPathDB" id="FungiDB:PABG_01461"/>
<dbReference type="HOGENOM" id="CLU_021802_3_0_1"/>
<dbReference type="OrthoDB" id="36099at33183"/>
<dbReference type="GO" id="GO:0005576">
    <property type="term" value="C:extracellular region"/>
    <property type="evidence" value="ECO:0007669"/>
    <property type="project" value="UniProtKB-SubCell"/>
</dbReference>
<dbReference type="GO" id="GO:0046872">
    <property type="term" value="F:metal ion binding"/>
    <property type="evidence" value="ECO:0007669"/>
    <property type="project" value="UniProtKB-KW"/>
</dbReference>
<dbReference type="GO" id="GO:0008233">
    <property type="term" value="F:peptidase activity"/>
    <property type="evidence" value="ECO:0007669"/>
    <property type="project" value="UniProtKB-KW"/>
</dbReference>
<dbReference type="GO" id="GO:0006508">
    <property type="term" value="P:proteolysis"/>
    <property type="evidence" value="ECO:0007669"/>
    <property type="project" value="UniProtKB-KW"/>
</dbReference>
<dbReference type="CDD" id="cd05652">
    <property type="entry name" value="M20_ArgE_DapE-like_fungal"/>
    <property type="match status" value="1"/>
</dbReference>
<dbReference type="Gene3D" id="3.30.70.360">
    <property type="match status" value="1"/>
</dbReference>
<dbReference type="Gene3D" id="3.40.630.10">
    <property type="entry name" value="Zn peptidases"/>
    <property type="match status" value="1"/>
</dbReference>
<dbReference type="InterPro" id="IPR036264">
    <property type="entry name" value="Bact_exopeptidase_dim_dom"/>
</dbReference>
<dbReference type="InterPro" id="IPR002933">
    <property type="entry name" value="Peptidase_M20"/>
</dbReference>
<dbReference type="InterPro" id="IPR011650">
    <property type="entry name" value="Peptidase_M20_dimer"/>
</dbReference>
<dbReference type="InterPro" id="IPR050072">
    <property type="entry name" value="Peptidase_M20A"/>
</dbReference>
<dbReference type="PANTHER" id="PTHR43808">
    <property type="entry name" value="ACETYLORNITHINE DEACETYLASE"/>
    <property type="match status" value="1"/>
</dbReference>
<dbReference type="PANTHER" id="PTHR43808:SF8">
    <property type="entry name" value="PEPTIDASE M20 DIMERISATION DOMAIN-CONTAINING PROTEIN"/>
    <property type="match status" value="1"/>
</dbReference>
<dbReference type="Pfam" id="PF07687">
    <property type="entry name" value="M20_dimer"/>
    <property type="match status" value="1"/>
</dbReference>
<dbReference type="Pfam" id="PF01546">
    <property type="entry name" value="Peptidase_M20"/>
    <property type="match status" value="1"/>
</dbReference>
<dbReference type="SUPFAM" id="SSF55031">
    <property type="entry name" value="Bacterial exopeptidase dimerisation domain"/>
    <property type="match status" value="1"/>
</dbReference>
<dbReference type="SUPFAM" id="SSF53187">
    <property type="entry name" value="Zn-dependent exopeptidases"/>
    <property type="match status" value="1"/>
</dbReference>
<proteinExistence type="inferred from homology"/>
<accession>C0S1J6</accession>
<protein>
    <recommendedName>
        <fullName>Probable carboxypeptidase PABG_01461</fullName>
        <ecNumber>3.4.17.-</ecNumber>
    </recommendedName>
    <alternativeName>
        <fullName>Peptidase M20 domain-containing protein PABG_01461</fullName>
    </alternativeName>
</protein>
<organism>
    <name type="scientific">Paracoccidioides brasiliensis (strain Pb03)</name>
    <dbReference type="NCBI Taxonomy" id="482561"/>
    <lineage>
        <taxon>Eukaryota</taxon>
        <taxon>Fungi</taxon>
        <taxon>Dikarya</taxon>
        <taxon>Ascomycota</taxon>
        <taxon>Pezizomycotina</taxon>
        <taxon>Eurotiomycetes</taxon>
        <taxon>Eurotiomycetidae</taxon>
        <taxon>Onygenales</taxon>
        <taxon>Ajellomycetaceae</taxon>
        <taxon>Paracoccidioides</taxon>
    </lineage>
</organism>
<feature type="signal peptide" evidence="2">
    <location>
        <begin position="1"/>
        <end position="20"/>
    </location>
</feature>
<feature type="chain" id="PRO_0000411239" description="Probable carboxypeptidase PABG_01461">
    <location>
        <begin position="21"/>
        <end position="442"/>
    </location>
</feature>
<feature type="active site" description="Proton acceptor" evidence="1">
    <location>
        <position position="192"/>
    </location>
</feature>
<feature type="binding site" evidence="1">
    <location>
        <position position="160"/>
    </location>
    <ligand>
        <name>Zn(2+)</name>
        <dbReference type="ChEBI" id="CHEBI:29105"/>
        <label>1</label>
    </ligand>
</feature>
<feature type="binding site" evidence="1">
    <location>
        <position position="160"/>
    </location>
    <ligand>
        <name>Zn(2+)</name>
        <dbReference type="ChEBI" id="CHEBI:29105"/>
        <label>2</label>
    </ligand>
</feature>
<feature type="binding site" evidence="1">
    <location>
        <position position="193"/>
    </location>
    <ligand>
        <name>Zn(2+)</name>
        <dbReference type="ChEBI" id="CHEBI:29105"/>
        <label>1</label>
    </ligand>
</feature>
<feature type="glycosylation site" description="N-linked (GlcNAc...) asparagine" evidence="2">
    <location>
        <position position="102"/>
    </location>
</feature>
<feature type="glycosylation site" description="N-linked (GlcNAc...) asparagine" evidence="2">
    <location>
        <position position="343"/>
    </location>
</feature>
<sequence>MKLQYLVALLSVQAVPPVTAGYIHQYALVGSAIRQPIDQKTQREDLNKLVSDSPLLSLHRTICEIESVSNREGAVGEVLLKYLRDRGFTVEKQIVPADRGTNSTAERFNIWAYPKGCPRPKIILTSHIDTVPPHIKYSLHAPDGDFDRAKVRIMGRGTVDAKASVAAQIIAALKHLKSNKDIPLGLLFVVSEEVGGSGMVHFSNSELNTNPPFFHTLIFGEPTDLTLVDGHKGNLRVTIEAKGVAAHSGYPWLGRSAISEILPILARMDELGDIPVETGGLPSSEKYGRTTVNIGTIKGGAADNVVPETASASIAVRLAAGTPEEAEEIIRRAVYDVSGGSTNITVNFPDSMPYPPIDLDVDVEGFDISTVNYGTDIPKLEIHDEELEVKVKRYLYGPGTIFVAHGAEEGITVGDLEKAVEGYSKLIDAAVKRGWPREVVVN</sequence>